<evidence type="ECO:0000255" key="1">
    <source>
        <dbReference type="HAMAP-Rule" id="MF_00321"/>
    </source>
</evidence>
<proteinExistence type="inferred from homology"/>
<organism>
    <name type="scientific">Methanococcus maripaludis (strain DSM 14266 / JCM 13030 / NBRC 101832 / S2 / LL)</name>
    <dbReference type="NCBI Taxonomy" id="267377"/>
    <lineage>
        <taxon>Archaea</taxon>
        <taxon>Methanobacteriati</taxon>
        <taxon>Methanobacteriota</taxon>
        <taxon>Methanomada group</taxon>
        <taxon>Methanococci</taxon>
        <taxon>Methanococcales</taxon>
        <taxon>Methanococcaceae</taxon>
        <taxon>Methanococcus</taxon>
    </lineage>
</organism>
<accession>Q6LXQ9</accession>
<comment type="function">
    <text evidence="1">Necessary for normal cell division and for the maintenance of normal septation.</text>
</comment>
<comment type="cofactor">
    <cofactor evidence="1">
        <name>Mg(2+)</name>
        <dbReference type="ChEBI" id="CHEBI:18420"/>
    </cofactor>
</comment>
<comment type="similarity">
    <text evidence="1">Belongs to the TRAFAC class TrmE-Era-EngA-EngB-Septin-like GTPase superfamily. EngB GTPase family.</text>
</comment>
<protein>
    <recommendedName>
        <fullName evidence="1">Probable GTP-binding protein EngB</fullName>
    </recommendedName>
</protein>
<reference key="1">
    <citation type="journal article" date="2004" name="J. Bacteriol.">
        <title>Complete genome sequence of the genetically tractable hydrogenotrophic methanogen Methanococcus maripaludis.</title>
        <authorList>
            <person name="Hendrickson E.L."/>
            <person name="Kaul R."/>
            <person name="Zhou Y."/>
            <person name="Bovee D."/>
            <person name="Chapman P."/>
            <person name="Chung J."/>
            <person name="Conway de Macario E."/>
            <person name="Dodsworth J.A."/>
            <person name="Gillett W."/>
            <person name="Graham D.E."/>
            <person name="Hackett M."/>
            <person name="Haydock A.K."/>
            <person name="Kang A."/>
            <person name="Land M.L."/>
            <person name="Levy R."/>
            <person name="Lie T.J."/>
            <person name="Major T.A."/>
            <person name="Moore B.C."/>
            <person name="Porat I."/>
            <person name="Palmeiri A."/>
            <person name="Rouse G."/>
            <person name="Saenphimmachak C."/>
            <person name="Soell D."/>
            <person name="Van Dien S."/>
            <person name="Wang T."/>
            <person name="Whitman W.B."/>
            <person name="Xia Q."/>
            <person name="Zhang Y."/>
            <person name="Larimer F.W."/>
            <person name="Olson M.V."/>
            <person name="Leigh J.A."/>
        </authorList>
    </citation>
    <scope>NUCLEOTIDE SEQUENCE [LARGE SCALE GENOMIC DNA]</scope>
    <source>
        <strain>DSM 14266 / JCM 13030 / NBRC 101832 / S2 / LL</strain>
    </source>
</reference>
<sequence length="230" mass="26663">MYENTNSEENNNNIQSQNMDIQKFKKYIRTEKKADERPKVIVMGRSNVGKSTFVKLVTGKNVRVGKKPGVTLKITEYDMGTYILVDLPGFGFMEGIEKKAQEKIKDEIIHYVEDNKDAIAASIHILDAKSFIDIVERWGNKGEVPIDLEMADFLEELELNPIFVVNKMDKIKNSEWDNHLDKVSETLGFLPPWRQWLDNFVPAIMRDNYGIDGIKHRINKRINIFKKSKK</sequence>
<dbReference type="EMBL" id="BX950229">
    <property type="protein sequence ID" value="CAF30846.1"/>
    <property type="molecule type" value="Genomic_DNA"/>
</dbReference>
<dbReference type="RefSeq" id="WP_011171234.1">
    <property type="nucleotide sequence ID" value="NC_005791.1"/>
</dbReference>
<dbReference type="SMR" id="Q6LXQ9"/>
<dbReference type="STRING" id="267377.MMP1290"/>
<dbReference type="EnsemblBacteria" id="CAF30846">
    <property type="protein sequence ID" value="CAF30846"/>
    <property type="gene ID" value="MMP1290"/>
</dbReference>
<dbReference type="GeneID" id="2762672"/>
<dbReference type="KEGG" id="mmp:MMP1290"/>
<dbReference type="PATRIC" id="fig|267377.15.peg.1323"/>
<dbReference type="eggNOG" id="arCOG00355">
    <property type="taxonomic scope" value="Archaea"/>
</dbReference>
<dbReference type="HOGENOM" id="CLU_033732_3_0_2"/>
<dbReference type="OrthoDB" id="65113at2157"/>
<dbReference type="Proteomes" id="UP000000590">
    <property type="component" value="Chromosome"/>
</dbReference>
<dbReference type="GO" id="GO:0005525">
    <property type="term" value="F:GTP binding"/>
    <property type="evidence" value="ECO:0007669"/>
    <property type="project" value="UniProtKB-UniRule"/>
</dbReference>
<dbReference type="GO" id="GO:0046872">
    <property type="term" value="F:metal ion binding"/>
    <property type="evidence" value="ECO:0007669"/>
    <property type="project" value="UniProtKB-KW"/>
</dbReference>
<dbReference type="GO" id="GO:0051301">
    <property type="term" value="P:cell division"/>
    <property type="evidence" value="ECO:0007669"/>
    <property type="project" value="UniProtKB-KW"/>
</dbReference>
<dbReference type="CDD" id="cd01876">
    <property type="entry name" value="YihA_EngB"/>
    <property type="match status" value="1"/>
</dbReference>
<dbReference type="Gene3D" id="3.40.50.300">
    <property type="entry name" value="P-loop containing nucleotide triphosphate hydrolases"/>
    <property type="match status" value="1"/>
</dbReference>
<dbReference type="HAMAP" id="MF_00321">
    <property type="entry name" value="GTPase_EngB"/>
    <property type="match status" value="1"/>
</dbReference>
<dbReference type="InterPro" id="IPR030393">
    <property type="entry name" value="G_ENGB_dom"/>
</dbReference>
<dbReference type="InterPro" id="IPR006073">
    <property type="entry name" value="GTP-bd"/>
</dbReference>
<dbReference type="InterPro" id="IPR019987">
    <property type="entry name" value="GTP-bd_ribosome_bio_YsxC"/>
</dbReference>
<dbReference type="InterPro" id="IPR027417">
    <property type="entry name" value="P-loop_NTPase"/>
</dbReference>
<dbReference type="NCBIfam" id="NF003255">
    <property type="entry name" value="PRK04213.1"/>
    <property type="match status" value="1"/>
</dbReference>
<dbReference type="PANTHER" id="PTHR11649:SF13">
    <property type="entry name" value="ENGB-TYPE G DOMAIN-CONTAINING PROTEIN"/>
    <property type="match status" value="1"/>
</dbReference>
<dbReference type="PANTHER" id="PTHR11649">
    <property type="entry name" value="MSS1/TRME-RELATED GTP-BINDING PROTEIN"/>
    <property type="match status" value="1"/>
</dbReference>
<dbReference type="Pfam" id="PF01926">
    <property type="entry name" value="MMR_HSR1"/>
    <property type="match status" value="1"/>
</dbReference>
<dbReference type="SUPFAM" id="SSF52540">
    <property type="entry name" value="P-loop containing nucleoside triphosphate hydrolases"/>
    <property type="match status" value="1"/>
</dbReference>
<dbReference type="PROSITE" id="PS51706">
    <property type="entry name" value="G_ENGB"/>
    <property type="match status" value="1"/>
</dbReference>
<feature type="chain" id="PRO_0000266988" description="Probable GTP-binding protein EngB">
    <location>
        <begin position="1"/>
        <end position="230"/>
    </location>
</feature>
<feature type="domain" description="EngB-type G" evidence="1">
    <location>
        <begin position="36"/>
        <end position="224"/>
    </location>
</feature>
<feature type="binding site" evidence="1">
    <location>
        <begin position="44"/>
        <end position="51"/>
    </location>
    <ligand>
        <name>GTP</name>
        <dbReference type="ChEBI" id="CHEBI:37565"/>
    </ligand>
</feature>
<feature type="binding site" evidence="1">
    <location>
        <position position="51"/>
    </location>
    <ligand>
        <name>Mg(2+)</name>
        <dbReference type="ChEBI" id="CHEBI:18420"/>
    </ligand>
</feature>
<feature type="binding site" evidence="1">
    <location>
        <begin position="69"/>
        <end position="73"/>
    </location>
    <ligand>
        <name>GTP</name>
        <dbReference type="ChEBI" id="CHEBI:37565"/>
    </ligand>
</feature>
<feature type="binding site" evidence="1">
    <location>
        <position position="71"/>
    </location>
    <ligand>
        <name>Mg(2+)</name>
        <dbReference type="ChEBI" id="CHEBI:18420"/>
    </ligand>
</feature>
<feature type="binding site" evidence="1">
    <location>
        <begin position="86"/>
        <end position="89"/>
    </location>
    <ligand>
        <name>GTP</name>
        <dbReference type="ChEBI" id="CHEBI:37565"/>
    </ligand>
</feature>
<feature type="binding site" evidence="1">
    <location>
        <begin position="166"/>
        <end position="169"/>
    </location>
    <ligand>
        <name>GTP</name>
        <dbReference type="ChEBI" id="CHEBI:37565"/>
    </ligand>
</feature>
<feature type="binding site" evidence="1">
    <location>
        <begin position="201"/>
        <end position="203"/>
    </location>
    <ligand>
        <name>GTP</name>
        <dbReference type="ChEBI" id="CHEBI:37565"/>
    </ligand>
</feature>
<keyword id="KW-0131">Cell cycle</keyword>
<keyword id="KW-0132">Cell division</keyword>
<keyword id="KW-0342">GTP-binding</keyword>
<keyword id="KW-0460">Magnesium</keyword>
<keyword id="KW-0479">Metal-binding</keyword>
<keyword id="KW-0547">Nucleotide-binding</keyword>
<keyword id="KW-1185">Reference proteome</keyword>
<keyword id="KW-0717">Septation</keyword>
<name>ENGB_METMP</name>
<gene>
    <name evidence="1" type="primary">engB</name>
    <name type="ordered locus">MMP1290</name>
</gene>